<proteinExistence type="evidence at transcript level"/>
<protein>
    <recommendedName>
        <fullName>Alpha-1-acid glycoprotein 1</fullName>
        <shortName>AGP 1</shortName>
    </recommendedName>
    <alternativeName>
        <fullName>Orosomucoid-1</fullName>
        <shortName>OMD 1</shortName>
    </alternativeName>
</protein>
<feature type="signal peptide">
    <location>
        <begin position="1"/>
        <end position="18"/>
    </location>
</feature>
<feature type="chain" id="PRO_0000017865" description="Alpha-1-acid glycoprotein 1">
    <location>
        <begin position="19"/>
        <end position="207"/>
    </location>
</feature>
<feature type="modified residue" description="Pyrrolidone carboxylic acid" evidence="2">
    <location>
        <position position="19"/>
    </location>
</feature>
<feature type="glycosylation site" description="N-linked (GlcNAc...) asparagine" evidence="3">
    <location>
        <position position="25"/>
    </location>
</feature>
<feature type="glycosylation site" description="N-linked (GlcNAc...) asparagine" evidence="3">
    <location>
        <position position="34"/>
    </location>
</feature>
<feature type="glycosylation site" description="N-linked (GlcNAc...) asparagine" evidence="3">
    <location>
        <position position="76"/>
    </location>
</feature>
<feature type="glycosylation site" description="N-linked (GlcNAc...) asparagine" evidence="3">
    <location>
        <position position="94"/>
    </location>
</feature>
<feature type="glycosylation site" description="N-linked (GlcNAc...) asparagine" evidence="3">
    <location>
        <position position="104"/>
    </location>
</feature>
<feature type="disulfide bond" evidence="1">
    <location>
        <begin position="91"/>
        <end position="184"/>
    </location>
</feature>
<feature type="sequence variant">
    <original>S</original>
    <variation>G</variation>
    <location>
        <position position="38"/>
    </location>
</feature>
<comment type="function">
    <text evidence="1">Functions as a transport protein in the blood stream. Binds various ligands in the interior of its beta-barrel domain (By similarity). Appears to function in modulating the activity of the immune system during the acute-phase reaction.</text>
</comment>
<comment type="subcellular location">
    <subcellularLocation>
        <location>Secreted</location>
    </subcellularLocation>
</comment>
<comment type="tissue specificity">
    <text>Expressed by the liver and secreted in plasma.</text>
</comment>
<comment type="domain">
    <text evidence="1">Contains a beta-barrel that binds various ligands in its interior.</text>
</comment>
<comment type="miscellaneous">
    <text>Eight genes coding for different forms of alpha-1-AGP are present in mus carolis.</text>
</comment>
<comment type="similarity">
    <text evidence="4">Belongs to the calycin superfamily. Lipocalin family.</text>
</comment>
<evidence type="ECO:0000250" key="1"/>
<evidence type="ECO:0000250" key="2">
    <source>
        <dbReference type="UniProtKB" id="P02763"/>
    </source>
</evidence>
<evidence type="ECO:0000255" key="3"/>
<evidence type="ECO:0000305" key="4"/>
<gene>
    <name type="primary">Orm1</name>
    <name type="synonym">Agp-1</name>
    <name type="synonym">Orm-1</name>
</gene>
<name>A1AG1_MUSCR</name>
<keyword id="KW-0011">Acute phase</keyword>
<keyword id="KW-1015">Disulfide bond</keyword>
<keyword id="KW-0325">Glycoprotein</keyword>
<keyword id="KW-0873">Pyrrolidone carboxylic acid</keyword>
<keyword id="KW-0964">Secreted</keyword>
<keyword id="KW-0732">Signal</keyword>
<keyword id="KW-0813">Transport</keyword>
<dbReference type="EMBL" id="M34648">
    <property type="protein sequence ID" value="AAA37195.1"/>
    <property type="molecule type" value="mRNA"/>
</dbReference>
<dbReference type="EMBL" id="M34647">
    <property type="protein sequence ID" value="AAA37197.1"/>
    <property type="molecule type" value="mRNA"/>
</dbReference>
<dbReference type="PIR" id="B35425">
    <property type="entry name" value="B35425"/>
</dbReference>
<dbReference type="SMR" id="P21350"/>
<dbReference type="GlyCosmos" id="P21350">
    <property type="glycosylation" value="5 sites, No reported glycans"/>
</dbReference>
<dbReference type="Proteomes" id="UP000515126">
    <property type="component" value="Unplaced"/>
</dbReference>
<dbReference type="GO" id="GO:0005615">
    <property type="term" value="C:extracellular space"/>
    <property type="evidence" value="ECO:0007669"/>
    <property type="project" value="InterPro"/>
</dbReference>
<dbReference type="GO" id="GO:0006953">
    <property type="term" value="P:acute-phase response"/>
    <property type="evidence" value="ECO:0007669"/>
    <property type="project" value="UniProtKB-KW"/>
</dbReference>
<dbReference type="GO" id="GO:0002682">
    <property type="term" value="P:regulation of immune system process"/>
    <property type="evidence" value="ECO:0007669"/>
    <property type="project" value="InterPro"/>
</dbReference>
<dbReference type="CDD" id="cd19451">
    <property type="entry name" value="lipocalin_AGP-like"/>
    <property type="match status" value="1"/>
</dbReference>
<dbReference type="FunFam" id="2.40.128.20:FF:000012">
    <property type="entry name" value="Alpha-1-acid glycoprotein 2"/>
    <property type="match status" value="1"/>
</dbReference>
<dbReference type="Gene3D" id="2.40.128.20">
    <property type="match status" value="1"/>
</dbReference>
<dbReference type="InterPro" id="IPR001500">
    <property type="entry name" value="A1A_glycop"/>
</dbReference>
<dbReference type="InterPro" id="IPR012674">
    <property type="entry name" value="Calycin"/>
</dbReference>
<dbReference type="InterPro" id="IPR000566">
    <property type="entry name" value="Lipocln_cytosolic_FA-bd_dom"/>
</dbReference>
<dbReference type="PANTHER" id="PTHR11967">
    <property type="entry name" value="ALPHA-1-ACID GLYCOPROTEIN"/>
    <property type="match status" value="1"/>
</dbReference>
<dbReference type="PANTHER" id="PTHR11967:SF2">
    <property type="entry name" value="ALPHA-1-ACID GLYCOPROTEIN 1"/>
    <property type="match status" value="1"/>
</dbReference>
<dbReference type="Pfam" id="PF00061">
    <property type="entry name" value="Lipocalin"/>
    <property type="match status" value="1"/>
</dbReference>
<dbReference type="PIRSF" id="PIRSF036899">
    <property type="entry name" value="AGP"/>
    <property type="match status" value="1"/>
</dbReference>
<dbReference type="PRINTS" id="PR00708">
    <property type="entry name" value="A1AGLPROTEIN"/>
</dbReference>
<dbReference type="SUPFAM" id="SSF50814">
    <property type="entry name" value="Lipocalins"/>
    <property type="match status" value="1"/>
</dbReference>
<accession>P21350</accession>
<sequence>MALHMILVMLSLLPLLEAQNPEHVNITIGEPITNETLSWLSDKWFFIGAAVLNPDYRQEIQKMQMVFFNITPNLINDTMELREYHTIDDHCVYNSTHLGIQRENGTLSKYVGGVKIFADLIVLRKHGAFMLAFDLKDEKKRGLSLNAKRPDITPELREVFQKAVKHVGMDESEIIFVDWKKDKCGQQEKKQLELEKETKKDPEEGQA</sequence>
<organism>
    <name type="scientific">Mus caroli</name>
    <name type="common">Ryukyu mouse</name>
    <name type="synonym">Ricefield mouse</name>
    <dbReference type="NCBI Taxonomy" id="10089"/>
    <lineage>
        <taxon>Eukaryota</taxon>
        <taxon>Metazoa</taxon>
        <taxon>Chordata</taxon>
        <taxon>Craniata</taxon>
        <taxon>Vertebrata</taxon>
        <taxon>Euteleostomi</taxon>
        <taxon>Mammalia</taxon>
        <taxon>Eutheria</taxon>
        <taxon>Euarchontoglires</taxon>
        <taxon>Glires</taxon>
        <taxon>Rodentia</taxon>
        <taxon>Myomorpha</taxon>
        <taxon>Muroidea</taxon>
        <taxon>Muridae</taxon>
        <taxon>Murinae</taxon>
        <taxon>Mus</taxon>
        <taxon>Mus</taxon>
    </lineage>
</organism>
<reference key="1">
    <citation type="journal article" date="1990" name="J. Biol. Chem.">
        <title>Molecular characterization and acute phase expression of the multiple Mus caroli alpha 1-acid glycoprotein (AGP) genes. Differences in glucocorticoid stimulation and regulatory elements between the rat and mouse AGP genes.</title>
        <authorList>
            <person name="Prowse K.R."/>
            <person name="Baumann H."/>
        </authorList>
    </citation>
    <scope>NUCLEOTIDE SEQUENCE [MRNA]</scope>
    <source>
        <tissue>Liver</tissue>
    </source>
</reference>